<gene>
    <name evidence="1" type="primary">uvrC</name>
    <name type="ordered locus">SpyM3_0749</name>
</gene>
<proteinExistence type="inferred from homology"/>
<protein>
    <recommendedName>
        <fullName evidence="1">UvrABC system protein C</fullName>
        <shortName evidence="1">Protein UvrC</shortName>
    </recommendedName>
    <alternativeName>
        <fullName evidence="1">Excinuclease ABC subunit C</fullName>
    </alternativeName>
</protein>
<comment type="function">
    <text evidence="1">The UvrABC repair system catalyzes the recognition and processing of DNA lesions. UvrC both incises the 5' and 3' sides of the lesion. The N-terminal half is responsible for the 3' incision and the C-terminal half is responsible for the 5' incision.</text>
</comment>
<comment type="subunit">
    <text evidence="1">Interacts with UvrB in an incision complex.</text>
</comment>
<comment type="subcellular location">
    <subcellularLocation>
        <location evidence="1">Cytoplasm</location>
    </subcellularLocation>
</comment>
<comment type="similarity">
    <text evidence="1">Belongs to the UvrC family.</text>
</comment>
<reference key="1">
    <citation type="journal article" date="2002" name="Proc. Natl. Acad. Sci. U.S.A.">
        <title>Genome sequence of a serotype M3 strain of group A Streptococcus: phage-encoded toxins, the high-virulence phenotype, and clone emergence.</title>
        <authorList>
            <person name="Beres S.B."/>
            <person name="Sylva G.L."/>
            <person name="Barbian K.D."/>
            <person name="Lei B."/>
            <person name="Hoff J.S."/>
            <person name="Mammarella N.D."/>
            <person name="Liu M.-Y."/>
            <person name="Smoot J.C."/>
            <person name="Porcella S.F."/>
            <person name="Parkins L.D."/>
            <person name="Campbell D.S."/>
            <person name="Smith T.M."/>
            <person name="McCormick J.K."/>
            <person name="Leung D.Y.M."/>
            <person name="Schlievert P.M."/>
            <person name="Musser J.M."/>
        </authorList>
    </citation>
    <scope>NUCLEOTIDE SEQUENCE [LARGE SCALE GENOMIC DNA]</scope>
    <source>
        <strain>ATCC BAA-595 / MGAS315</strain>
    </source>
</reference>
<sequence length="598" mass="68932">MNELIKHKLELLPDSPGCYLHKDKEGTIIYVGKAKNLKKRVRSYFRGSHDTKTELLVSEIVDFEYIVTESDTEALLLEINLIQKNMPKYNIKLKDDKSYPFLKITNESFPRLVITRYIKKNDGLYFGPYPDSYTANEVKKLLDRIFPFKKCKNPINKVCFYYHLGQCCAHTICHTDKVYWDRLIDDVKHFLNGKDDKIIEDLRSKMLAASEEMAFERAAEYRDLISGIATMRTKQRVMSKDLQDRDIFGYYVDKGWMCVQVFFVRQGKLIQRDVNLFPYYNDAEEDFLTYMGQFYQDKQHFIPKEVFIPEAIDEELVAAIVPTKIIKPKRGEKKQLVALATKNARVSLQQKFDLLEKDIKKTSGAIENLGQLLKIDKPVRIEAFDNSNIQGTSPVAAMVVFVDGKPSKKDYRKFKIKTVVGPDDYASMREVLFRRYSRVKKEGLQAPNLIIVDGGVGQVNVAKDVIEKQLGLTIPVAGLQKNDKHQTHDLLFGNPLEVVPLPRRSEEFFLLHRIQDEVHRFAVTFHRQVRRKNSFSSTLDHISGLGPKRKQLLLRHFKTITAIASATSEEIQALGIPKTVVEAIQQQITDNKNDRSSP</sequence>
<dbReference type="EMBL" id="AE014074">
    <property type="protein sequence ID" value="AAM79356.1"/>
    <property type="molecule type" value="Genomic_DNA"/>
</dbReference>
<dbReference type="RefSeq" id="WP_011054460.1">
    <property type="nucleotide sequence ID" value="NC_004070.1"/>
</dbReference>
<dbReference type="SMR" id="P0DH40"/>
<dbReference type="KEGG" id="spg:SpyM3_0749"/>
<dbReference type="HOGENOM" id="CLU_014841_3_2_9"/>
<dbReference type="Proteomes" id="UP000000564">
    <property type="component" value="Chromosome"/>
</dbReference>
<dbReference type="GO" id="GO:0005737">
    <property type="term" value="C:cytoplasm"/>
    <property type="evidence" value="ECO:0007669"/>
    <property type="project" value="UniProtKB-SubCell"/>
</dbReference>
<dbReference type="GO" id="GO:0009380">
    <property type="term" value="C:excinuclease repair complex"/>
    <property type="evidence" value="ECO:0007669"/>
    <property type="project" value="InterPro"/>
</dbReference>
<dbReference type="GO" id="GO:0003677">
    <property type="term" value="F:DNA binding"/>
    <property type="evidence" value="ECO:0007669"/>
    <property type="project" value="UniProtKB-UniRule"/>
</dbReference>
<dbReference type="GO" id="GO:0009381">
    <property type="term" value="F:excinuclease ABC activity"/>
    <property type="evidence" value="ECO:0007669"/>
    <property type="project" value="UniProtKB-UniRule"/>
</dbReference>
<dbReference type="GO" id="GO:0006289">
    <property type="term" value="P:nucleotide-excision repair"/>
    <property type="evidence" value="ECO:0007669"/>
    <property type="project" value="UniProtKB-UniRule"/>
</dbReference>
<dbReference type="GO" id="GO:0009432">
    <property type="term" value="P:SOS response"/>
    <property type="evidence" value="ECO:0007669"/>
    <property type="project" value="UniProtKB-UniRule"/>
</dbReference>
<dbReference type="CDD" id="cd10434">
    <property type="entry name" value="GIY-YIG_UvrC_Cho"/>
    <property type="match status" value="1"/>
</dbReference>
<dbReference type="FunFam" id="3.30.420.340:FF:000002">
    <property type="entry name" value="UvrABC system protein C"/>
    <property type="match status" value="1"/>
</dbReference>
<dbReference type="FunFam" id="3.40.1440.10:FF:000001">
    <property type="entry name" value="UvrABC system protein C"/>
    <property type="match status" value="1"/>
</dbReference>
<dbReference type="Gene3D" id="1.10.150.20">
    <property type="entry name" value="5' to 3' exonuclease, C-terminal subdomain"/>
    <property type="match status" value="1"/>
</dbReference>
<dbReference type="Gene3D" id="3.40.1440.10">
    <property type="entry name" value="GIY-YIG endonuclease"/>
    <property type="match status" value="1"/>
</dbReference>
<dbReference type="Gene3D" id="4.10.860.10">
    <property type="entry name" value="UVR domain"/>
    <property type="match status" value="1"/>
</dbReference>
<dbReference type="Gene3D" id="3.30.420.340">
    <property type="entry name" value="UvrC, RNAse H endonuclease domain"/>
    <property type="match status" value="1"/>
</dbReference>
<dbReference type="HAMAP" id="MF_00203">
    <property type="entry name" value="UvrC"/>
    <property type="match status" value="1"/>
</dbReference>
<dbReference type="InterPro" id="IPR000305">
    <property type="entry name" value="GIY-YIG_endonuc"/>
</dbReference>
<dbReference type="InterPro" id="IPR035901">
    <property type="entry name" value="GIY-YIG_endonuc_sf"/>
</dbReference>
<dbReference type="InterPro" id="IPR047296">
    <property type="entry name" value="GIY-YIG_UvrC_Cho"/>
</dbReference>
<dbReference type="InterPro" id="IPR010994">
    <property type="entry name" value="RuvA_2-like"/>
</dbReference>
<dbReference type="InterPro" id="IPR001943">
    <property type="entry name" value="UVR_dom"/>
</dbReference>
<dbReference type="InterPro" id="IPR036876">
    <property type="entry name" value="UVR_dom_sf"/>
</dbReference>
<dbReference type="InterPro" id="IPR050066">
    <property type="entry name" value="UvrABC_protein_C"/>
</dbReference>
<dbReference type="InterPro" id="IPR004791">
    <property type="entry name" value="UvrC"/>
</dbReference>
<dbReference type="InterPro" id="IPR001162">
    <property type="entry name" value="UvrC_RNase_H_dom"/>
</dbReference>
<dbReference type="InterPro" id="IPR038476">
    <property type="entry name" value="UvrC_RNase_H_dom_sf"/>
</dbReference>
<dbReference type="NCBIfam" id="TIGR00194">
    <property type="entry name" value="uvrC"/>
    <property type="match status" value="1"/>
</dbReference>
<dbReference type="PANTHER" id="PTHR30562:SF1">
    <property type="entry name" value="UVRABC SYSTEM PROTEIN C"/>
    <property type="match status" value="1"/>
</dbReference>
<dbReference type="PANTHER" id="PTHR30562">
    <property type="entry name" value="UVRC/OXIDOREDUCTASE"/>
    <property type="match status" value="1"/>
</dbReference>
<dbReference type="Pfam" id="PF01541">
    <property type="entry name" value="GIY-YIG"/>
    <property type="match status" value="1"/>
</dbReference>
<dbReference type="Pfam" id="PF14520">
    <property type="entry name" value="HHH_5"/>
    <property type="match status" value="1"/>
</dbReference>
<dbReference type="Pfam" id="PF02151">
    <property type="entry name" value="UVR"/>
    <property type="match status" value="1"/>
</dbReference>
<dbReference type="Pfam" id="PF22920">
    <property type="entry name" value="UvrC_RNaseH"/>
    <property type="match status" value="1"/>
</dbReference>
<dbReference type="Pfam" id="PF08459">
    <property type="entry name" value="UvrC_RNaseH_dom"/>
    <property type="match status" value="1"/>
</dbReference>
<dbReference type="SMART" id="SM00465">
    <property type="entry name" value="GIYc"/>
    <property type="match status" value="1"/>
</dbReference>
<dbReference type="SUPFAM" id="SSF46600">
    <property type="entry name" value="C-terminal UvrC-binding domain of UvrB"/>
    <property type="match status" value="1"/>
</dbReference>
<dbReference type="SUPFAM" id="SSF82771">
    <property type="entry name" value="GIY-YIG endonuclease"/>
    <property type="match status" value="1"/>
</dbReference>
<dbReference type="SUPFAM" id="SSF47781">
    <property type="entry name" value="RuvA domain 2-like"/>
    <property type="match status" value="1"/>
</dbReference>
<dbReference type="PROSITE" id="PS50164">
    <property type="entry name" value="GIY_YIG"/>
    <property type="match status" value="1"/>
</dbReference>
<dbReference type="PROSITE" id="PS50151">
    <property type="entry name" value="UVR"/>
    <property type="match status" value="1"/>
</dbReference>
<dbReference type="PROSITE" id="PS50165">
    <property type="entry name" value="UVRC"/>
    <property type="match status" value="1"/>
</dbReference>
<feature type="chain" id="PRO_0000138349" description="UvrABC system protein C">
    <location>
        <begin position="1"/>
        <end position="598"/>
    </location>
</feature>
<feature type="domain" description="GIY-YIG" evidence="1">
    <location>
        <begin position="14"/>
        <end position="91"/>
    </location>
</feature>
<feature type="domain" description="UVR" evidence="1">
    <location>
        <begin position="196"/>
        <end position="231"/>
    </location>
</feature>
<accession>P0DH40</accession>
<accession>Q8K7L7</accession>
<keyword id="KW-0963">Cytoplasm</keyword>
<keyword id="KW-0227">DNA damage</keyword>
<keyword id="KW-0228">DNA excision</keyword>
<keyword id="KW-0234">DNA repair</keyword>
<keyword id="KW-0267">Excision nuclease</keyword>
<keyword id="KW-0742">SOS response</keyword>
<organism>
    <name type="scientific">Streptococcus pyogenes serotype M3 (strain ATCC BAA-595 / MGAS315)</name>
    <dbReference type="NCBI Taxonomy" id="198466"/>
    <lineage>
        <taxon>Bacteria</taxon>
        <taxon>Bacillati</taxon>
        <taxon>Bacillota</taxon>
        <taxon>Bacilli</taxon>
        <taxon>Lactobacillales</taxon>
        <taxon>Streptococcaceae</taxon>
        <taxon>Streptococcus</taxon>
    </lineage>
</organism>
<name>UVRC_STRP3</name>
<evidence type="ECO:0000255" key="1">
    <source>
        <dbReference type="HAMAP-Rule" id="MF_00203"/>
    </source>
</evidence>